<proteinExistence type="inferred from homology"/>
<gene>
    <name evidence="1" type="primary">leuS</name>
    <name type="ordered locus">Mmwyl1_2915</name>
</gene>
<accession>A6VZE7</accession>
<reference key="1">
    <citation type="submission" date="2007-06" db="EMBL/GenBank/DDBJ databases">
        <title>Complete sequence of Marinomonas sp. MWYL1.</title>
        <authorList>
            <consortium name="US DOE Joint Genome Institute"/>
            <person name="Copeland A."/>
            <person name="Lucas S."/>
            <person name="Lapidus A."/>
            <person name="Barry K."/>
            <person name="Glavina del Rio T."/>
            <person name="Dalin E."/>
            <person name="Tice H."/>
            <person name="Pitluck S."/>
            <person name="Kiss H."/>
            <person name="Brettin T."/>
            <person name="Bruce D."/>
            <person name="Detter J.C."/>
            <person name="Han C."/>
            <person name="Schmutz J."/>
            <person name="Larimer F."/>
            <person name="Land M."/>
            <person name="Hauser L."/>
            <person name="Kyrpides N."/>
            <person name="Kim E."/>
            <person name="Johnston A.W.B."/>
            <person name="Todd J.D."/>
            <person name="Rogers R."/>
            <person name="Wexler M."/>
            <person name="Bond P.L."/>
            <person name="Li Y."/>
            <person name="Richardson P."/>
        </authorList>
    </citation>
    <scope>NUCLEOTIDE SEQUENCE [LARGE SCALE GENOMIC DNA]</scope>
    <source>
        <strain>MWYL1</strain>
    </source>
</reference>
<organism>
    <name type="scientific">Marinomonas sp. (strain MWYL1)</name>
    <dbReference type="NCBI Taxonomy" id="400668"/>
    <lineage>
        <taxon>Bacteria</taxon>
        <taxon>Pseudomonadati</taxon>
        <taxon>Pseudomonadota</taxon>
        <taxon>Gammaproteobacteria</taxon>
        <taxon>Oceanospirillales</taxon>
        <taxon>Oceanospirillaceae</taxon>
        <taxon>Marinomonas</taxon>
    </lineage>
</organism>
<sequence>MQEQYNPQQIEQAAQSFWDENKVFKAIADSSKEKFYCLSMFPYPSGRLHMGHVRNYTIGDVISRYQRMQGKNVLQPMGWDAFGLPAENAAIKHKTAPAKWTTENIAYMKGQLKELGFGYDWDREIATCTPEYYKWEQWFFTQLVEKGLAYKKTAAVNWCPEDQTVLANEQVEDGCCWRCGTNVEKKEISQWFIRITDYAEELLNDLDQLDGWPEKVKAMQRNWIGRSEGLEFSFAVEGKDERLSVYTTRPDTIMGVTYVAVATQHPLSLEASANNADLAAFIEESKKMSTTEADMATVEKKGMDTGFKAIHPITGEAVPVYAANFVLMDYGSGAVMSVPAHDQRDFEFAKKYNLAIKQVVQPAGDEVIDLEKAAFTEKGVLCNSGEFDGLAFKEAFDAIAAWMVERNLGEVKVNYRLRDWGVSRQRYWGTPIPTINLKDGSVVPVPQDQLPVELPTDVIMDGVNSPIKNNPDFSSIMFNGEEAERETDTFDTFMESSWYFARYCCPDSTDAMLTEEANYWLPVDQYVGGVEHAILHLLYSRFFHKLLRDAGLVNSDEPFKRLLTQGMVNKDGTKMSKSKGNTVDPQEMIEKYGADTVRLFMMFSAPPEQSLEWNDAGVDGASRFLRRLWALSYRHTNAGKVGELNIAELNGAQKALRRKTHETIQKVSDDIERRQTFNTAIAAVMELCNEISKFEDSSELGLAVEQEALEAATLLLSPIVPHIAHQLWSELGHSDNIVNTPWPTLDEEALIKDELTIVVQVLGKKRAELTVSANADNKTIEAEALAHPSVAKLLEGKTVRKVIVVPGRLVNIVAN</sequence>
<keyword id="KW-0030">Aminoacyl-tRNA synthetase</keyword>
<keyword id="KW-0067">ATP-binding</keyword>
<keyword id="KW-0963">Cytoplasm</keyword>
<keyword id="KW-0436">Ligase</keyword>
<keyword id="KW-0547">Nucleotide-binding</keyword>
<keyword id="KW-0648">Protein biosynthesis</keyword>
<feature type="chain" id="PRO_1000074837" description="Leucine--tRNA ligase">
    <location>
        <begin position="1"/>
        <end position="815"/>
    </location>
</feature>
<feature type="short sequence motif" description="'HIGH' region">
    <location>
        <begin position="42"/>
        <end position="52"/>
    </location>
</feature>
<feature type="short sequence motif" description="'KMSKS' region">
    <location>
        <begin position="574"/>
        <end position="578"/>
    </location>
</feature>
<feature type="binding site" evidence="1">
    <location>
        <position position="577"/>
    </location>
    <ligand>
        <name>ATP</name>
        <dbReference type="ChEBI" id="CHEBI:30616"/>
    </ligand>
</feature>
<dbReference type="EC" id="6.1.1.4" evidence="1"/>
<dbReference type="EMBL" id="CP000749">
    <property type="protein sequence ID" value="ABR71826.1"/>
    <property type="molecule type" value="Genomic_DNA"/>
</dbReference>
<dbReference type="SMR" id="A6VZE7"/>
<dbReference type="STRING" id="400668.Mmwyl1_2915"/>
<dbReference type="KEGG" id="mmw:Mmwyl1_2915"/>
<dbReference type="eggNOG" id="COG0495">
    <property type="taxonomic scope" value="Bacteria"/>
</dbReference>
<dbReference type="HOGENOM" id="CLU_004427_0_0_6"/>
<dbReference type="OrthoDB" id="9810365at2"/>
<dbReference type="GO" id="GO:0005829">
    <property type="term" value="C:cytosol"/>
    <property type="evidence" value="ECO:0007669"/>
    <property type="project" value="TreeGrafter"/>
</dbReference>
<dbReference type="GO" id="GO:0002161">
    <property type="term" value="F:aminoacyl-tRNA deacylase activity"/>
    <property type="evidence" value="ECO:0007669"/>
    <property type="project" value="InterPro"/>
</dbReference>
<dbReference type="GO" id="GO:0005524">
    <property type="term" value="F:ATP binding"/>
    <property type="evidence" value="ECO:0007669"/>
    <property type="project" value="UniProtKB-UniRule"/>
</dbReference>
<dbReference type="GO" id="GO:0004823">
    <property type="term" value="F:leucine-tRNA ligase activity"/>
    <property type="evidence" value="ECO:0007669"/>
    <property type="project" value="UniProtKB-UniRule"/>
</dbReference>
<dbReference type="GO" id="GO:0006429">
    <property type="term" value="P:leucyl-tRNA aminoacylation"/>
    <property type="evidence" value="ECO:0007669"/>
    <property type="project" value="UniProtKB-UniRule"/>
</dbReference>
<dbReference type="CDD" id="cd07958">
    <property type="entry name" value="Anticodon_Ia_Leu_BEm"/>
    <property type="match status" value="1"/>
</dbReference>
<dbReference type="CDD" id="cd00812">
    <property type="entry name" value="LeuRS_core"/>
    <property type="match status" value="1"/>
</dbReference>
<dbReference type="FunFam" id="1.10.730.10:FF:000003">
    <property type="entry name" value="Leucine--tRNA ligase"/>
    <property type="match status" value="1"/>
</dbReference>
<dbReference type="FunFam" id="3.10.20.590:FF:000001">
    <property type="entry name" value="Leucine--tRNA ligase"/>
    <property type="match status" value="1"/>
</dbReference>
<dbReference type="FunFam" id="3.40.50.620:FF:000003">
    <property type="entry name" value="Leucine--tRNA ligase"/>
    <property type="match status" value="1"/>
</dbReference>
<dbReference type="FunFam" id="3.40.50.620:FF:000124">
    <property type="entry name" value="Leucine--tRNA ligase"/>
    <property type="match status" value="1"/>
</dbReference>
<dbReference type="FunFam" id="3.90.740.10:FF:000012">
    <property type="entry name" value="Leucine--tRNA ligase"/>
    <property type="match status" value="1"/>
</dbReference>
<dbReference type="Gene3D" id="3.10.20.590">
    <property type="match status" value="1"/>
</dbReference>
<dbReference type="Gene3D" id="3.40.50.620">
    <property type="entry name" value="HUPs"/>
    <property type="match status" value="2"/>
</dbReference>
<dbReference type="Gene3D" id="1.10.730.10">
    <property type="entry name" value="Isoleucyl-tRNA Synthetase, Domain 1"/>
    <property type="match status" value="1"/>
</dbReference>
<dbReference type="HAMAP" id="MF_00049_B">
    <property type="entry name" value="Leu_tRNA_synth_B"/>
    <property type="match status" value="1"/>
</dbReference>
<dbReference type="InterPro" id="IPR001412">
    <property type="entry name" value="aa-tRNA-synth_I_CS"/>
</dbReference>
<dbReference type="InterPro" id="IPR002300">
    <property type="entry name" value="aa-tRNA-synth_Ia"/>
</dbReference>
<dbReference type="InterPro" id="IPR002302">
    <property type="entry name" value="Leu-tRNA-ligase"/>
</dbReference>
<dbReference type="InterPro" id="IPR025709">
    <property type="entry name" value="Leu_tRNA-synth_edit"/>
</dbReference>
<dbReference type="InterPro" id="IPR013155">
    <property type="entry name" value="M/V/L/I-tRNA-synth_anticd-bd"/>
</dbReference>
<dbReference type="InterPro" id="IPR015413">
    <property type="entry name" value="Methionyl/Leucyl_tRNA_Synth"/>
</dbReference>
<dbReference type="InterPro" id="IPR014729">
    <property type="entry name" value="Rossmann-like_a/b/a_fold"/>
</dbReference>
<dbReference type="InterPro" id="IPR009080">
    <property type="entry name" value="tRNAsynth_Ia_anticodon-bd"/>
</dbReference>
<dbReference type="InterPro" id="IPR009008">
    <property type="entry name" value="Val/Leu/Ile-tRNA-synth_edit"/>
</dbReference>
<dbReference type="NCBIfam" id="TIGR00396">
    <property type="entry name" value="leuS_bact"/>
    <property type="match status" value="1"/>
</dbReference>
<dbReference type="PANTHER" id="PTHR43740:SF2">
    <property type="entry name" value="LEUCINE--TRNA LIGASE, MITOCHONDRIAL"/>
    <property type="match status" value="1"/>
</dbReference>
<dbReference type="PANTHER" id="PTHR43740">
    <property type="entry name" value="LEUCYL-TRNA SYNTHETASE"/>
    <property type="match status" value="1"/>
</dbReference>
<dbReference type="Pfam" id="PF08264">
    <property type="entry name" value="Anticodon_1"/>
    <property type="match status" value="1"/>
</dbReference>
<dbReference type="Pfam" id="PF00133">
    <property type="entry name" value="tRNA-synt_1"/>
    <property type="match status" value="1"/>
</dbReference>
<dbReference type="Pfam" id="PF13603">
    <property type="entry name" value="tRNA-synt_1_2"/>
    <property type="match status" value="1"/>
</dbReference>
<dbReference type="Pfam" id="PF09334">
    <property type="entry name" value="tRNA-synt_1g"/>
    <property type="match status" value="1"/>
</dbReference>
<dbReference type="PRINTS" id="PR00985">
    <property type="entry name" value="TRNASYNTHLEU"/>
</dbReference>
<dbReference type="SUPFAM" id="SSF47323">
    <property type="entry name" value="Anticodon-binding domain of a subclass of class I aminoacyl-tRNA synthetases"/>
    <property type="match status" value="1"/>
</dbReference>
<dbReference type="SUPFAM" id="SSF52374">
    <property type="entry name" value="Nucleotidylyl transferase"/>
    <property type="match status" value="1"/>
</dbReference>
<dbReference type="SUPFAM" id="SSF50677">
    <property type="entry name" value="ValRS/IleRS/LeuRS editing domain"/>
    <property type="match status" value="1"/>
</dbReference>
<dbReference type="PROSITE" id="PS00178">
    <property type="entry name" value="AA_TRNA_LIGASE_I"/>
    <property type="match status" value="1"/>
</dbReference>
<name>SYL_MARMS</name>
<evidence type="ECO:0000255" key="1">
    <source>
        <dbReference type="HAMAP-Rule" id="MF_00049"/>
    </source>
</evidence>
<comment type="catalytic activity">
    <reaction evidence="1">
        <text>tRNA(Leu) + L-leucine + ATP = L-leucyl-tRNA(Leu) + AMP + diphosphate</text>
        <dbReference type="Rhea" id="RHEA:11688"/>
        <dbReference type="Rhea" id="RHEA-COMP:9613"/>
        <dbReference type="Rhea" id="RHEA-COMP:9622"/>
        <dbReference type="ChEBI" id="CHEBI:30616"/>
        <dbReference type="ChEBI" id="CHEBI:33019"/>
        <dbReference type="ChEBI" id="CHEBI:57427"/>
        <dbReference type="ChEBI" id="CHEBI:78442"/>
        <dbReference type="ChEBI" id="CHEBI:78494"/>
        <dbReference type="ChEBI" id="CHEBI:456215"/>
        <dbReference type="EC" id="6.1.1.4"/>
    </reaction>
</comment>
<comment type="subcellular location">
    <subcellularLocation>
        <location evidence="1">Cytoplasm</location>
    </subcellularLocation>
</comment>
<comment type="similarity">
    <text evidence="1">Belongs to the class-I aminoacyl-tRNA synthetase family.</text>
</comment>
<protein>
    <recommendedName>
        <fullName evidence="1">Leucine--tRNA ligase</fullName>
        <ecNumber evidence="1">6.1.1.4</ecNumber>
    </recommendedName>
    <alternativeName>
        <fullName evidence="1">Leucyl-tRNA synthetase</fullName>
        <shortName evidence="1">LeuRS</shortName>
    </alternativeName>
</protein>